<dbReference type="EMBL" id="AL590445">
    <property type="protein sequence ID" value="CAD26685.1"/>
    <property type="molecule type" value="Genomic_DNA"/>
</dbReference>
<dbReference type="RefSeq" id="NP_586314.1">
    <property type="nucleotide sequence ID" value="NM_001042147.1"/>
</dbReference>
<dbReference type="RefSeq" id="NP_597508.1">
    <property type="nucleotide sequence ID" value="NM_001041374.1"/>
</dbReference>
<dbReference type="GeneID" id="859175"/>
<dbReference type="KEGG" id="ecu:ECU05_1650"/>
<dbReference type="KEGG" id="ecu:ECU11_0080"/>
<dbReference type="VEuPathDB" id="MicrosporidiaDB:ECU05_1650"/>
<dbReference type="HOGENOM" id="CLU_2145833_0_0_1"/>
<dbReference type="InParanoid" id="P0CT00"/>
<dbReference type="Proteomes" id="UP000000819">
    <property type="component" value="Chromosome V"/>
</dbReference>
<dbReference type="InterPro" id="IPR022115">
    <property type="entry name" value="DUF3654"/>
</dbReference>
<dbReference type="Pfam" id="PF12376">
    <property type="entry name" value="DUF3654"/>
    <property type="match status" value="1"/>
</dbReference>
<feature type="chain" id="PRO_0000223159" description="UPF0329 protein ECU05_1650">
    <location>
        <begin position="1"/>
        <end position="116"/>
    </location>
</feature>
<accession>P0CT00</accession>
<accession>Q8STI0</accession>
<comment type="similarity">
    <text evidence="1">Belongs to the UPF0329 family.</text>
</comment>
<name>Y5G5_ENCCU</name>
<evidence type="ECO:0000305" key="1"/>
<protein>
    <recommendedName>
        <fullName>UPF0329 protein ECU05_1650</fullName>
    </recommendedName>
</protein>
<proteinExistence type="inferred from homology"/>
<keyword id="KW-1185">Reference proteome</keyword>
<sequence>MSLIMEAHSEHLCLRMIRLNADEMEEPLLHYMSYERLVNTYERYKSIGIVAEIAKRVFVETRILMTKVSTAQCMKPGREKRWKGSVRRRSLENFRLRGGIQWYSHACRGMAIGLQN</sequence>
<gene>
    <name type="ordered locus">ECU05_1650</name>
</gene>
<reference key="1">
    <citation type="journal article" date="2001" name="Nature">
        <title>Genome sequence and gene compaction of the eukaryote parasite Encephalitozoon cuniculi.</title>
        <authorList>
            <person name="Katinka M.D."/>
            <person name="Duprat S."/>
            <person name="Cornillot E."/>
            <person name="Metenier G."/>
            <person name="Thomarat F."/>
            <person name="Prensier G."/>
            <person name="Barbe V."/>
            <person name="Peyretaillade E."/>
            <person name="Brottier P."/>
            <person name="Wincker P."/>
            <person name="Delbac F."/>
            <person name="El Alaoui H."/>
            <person name="Peyret P."/>
            <person name="Saurin W."/>
            <person name="Gouy M."/>
            <person name="Weissenbach J."/>
            <person name="Vivares C.P."/>
        </authorList>
    </citation>
    <scope>NUCLEOTIDE SEQUENCE [LARGE SCALE GENOMIC DNA]</scope>
    <source>
        <strain>GB-M1</strain>
    </source>
</reference>
<organism>
    <name type="scientific">Encephalitozoon cuniculi (strain GB-M1)</name>
    <name type="common">Microsporidian parasite</name>
    <dbReference type="NCBI Taxonomy" id="284813"/>
    <lineage>
        <taxon>Eukaryota</taxon>
        <taxon>Fungi</taxon>
        <taxon>Fungi incertae sedis</taxon>
        <taxon>Microsporidia</taxon>
        <taxon>Unikaryonidae</taxon>
        <taxon>Encephalitozoon</taxon>
    </lineage>
</organism>